<accession>B0URI2</accession>
<sequence length="203" mass="22583">MANYQDITFALAGVCQAAKLVQQLAMNGTVDQEILRTGLSTLLQTAPEDTLAVYGGQKSNLKLGLETLMEQLNGSDVTLNRYWLGLLALEGKLHKNAQAKSELARRIQYLPTQLAHYDLLDEQMLSTLASIYVDVISPLGARIQVQGSPLYLQQLMTQNRIRACLLTGIRSAVLWRQVGGTKWQFLFSRRKLVATAQQIYSSI</sequence>
<keyword id="KW-0997">Cell inner membrane</keyword>
<keyword id="KW-1003">Cell membrane</keyword>
<keyword id="KW-0963">Cytoplasm</keyword>
<keyword id="KW-0472">Membrane</keyword>
<gene>
    <name evidence="1" type="primary">hflD</name>
    <name type="ordered locus">HSM_0417</name>
</gene>
<organism>
    <name type="scientific">Histophilus somni (strain 2336)</name>
    <name type="common">Haemophilus somnus</name>
    <dbReference type="NCBI Taxonomy" id="228400"/>
    <lineage>
        <taxon>Bacteria</taxon>
        <taxon>Pseudomonadati</taxon>
        <taxon>Pseudomonadota</taxon>
        <taxon>Gammaproteobacteria</taxon>
        <taxon>Pasteurellales</taxon>
        <taxon>Pasteurellaceae</taxon>
        <taxon>Histophilus</taxon>
    </lineage>
</organism>
<comment type="subcellular location">
    <subcellularLocation>
        <location>Cytoplasm</location>
    </subcellularLocation>
    <subcellularLocation>
        <location evidence="1">Cell inner membrane</location>
        <topology evidence="1">Peripheral membrane protein</topology>
        <orientation evidence="1">Cytoplasmic side</orientation>
    </subcellularLocation>
</comment>
<comment type="similarity">
    <text evidence="1">Belongs to the HflD family.</text>
</comment>
<feature type="chain" id="PRO_1000132292" description="High frequency lysogenization protein HflD homolog">
    <location>
        <begin position="1"/>
        <end position="203"/>
    </location>
</feature>
<dbReference type="EMBL" id="CP000947">
    <property type="protein sequence ID" value="ACA32060.1"/>
    <property type="molecule type" value="Genomic_DNA"/>
</dbReference>
<dbReference type="RefSeq" id="WP_011609740.1">
    <property type="nucleotide sequence ID" value="NC_010519.1"/>
</dbReference>
<dbReference type="SMR" id="B0URI2"/>
<dbReference type="STRING" id="228400.HSM_0417"/>
<dbReference type="GeneID" id="31486697"/>
<dbReference type="KEGG" id="hsm:HSM_0417"/>
<dbReference type="HOGENOM" id="CLU_098920_0_0_6"/>
<dbReference type="GO" id="GO:0005737">
    <property type="term" value="C:cytoplasm"/>
    <property type="evidence" value="ECO:0007669"/>
    <property type="project" value="UniProtKB-SubCell"/>
</dbReference>
<dbReference type="GO" id="GO:0005886">
    <property type="term" value="C:plasma membrane"/>
    <property type="evidence" value="ECO:0007669"/>
    <property type="project" value="UniProtKB-SubCell"/>
</dbReference>
<dbReference type="Gene3D" id="1.10.3890.10">
    <property type="entry name" value="HflD-like"/>
    <property type="match status" value="1"/>
</dbReference>
<dbReference type="HAMAP" id="MF_00695">
    <property type="entry name" value="HflD_protein"/>
    <property type="match status" value="1"/>
</dbReference>
<dbReference type="InterPro" id="IPR007451">
    <property type="entry name" value="HflD"/>
</dbReference>
<dbReference type="InterPro" id="IPR035932">
    <property type="entry name" value="HflD-like_sf"/>
</dbReference>
<dbReference type="NCBIfam" id="NF001246">
    <property type="entry name" value="PRK00218.1-2"/>
    <property type="match status" value="1"/>
</dbReference>
<dbReference type="NCBIfam" id="NF001248">
    <property type="entry name" value="PRK00218.1-4"/>
    <property type="match status" value="1"/>
</dbReference>
<dbReference type="PANTHER" id="PTHR38100">
    <property type="entry name" value="HIGH FREQUENCY LYSOGENIZATION PROTEIN HFLD"/>
    <property type="match status" value="1"/>
</dbReference>
<dbReference type="PANTHER" id="PTHR38100:SF1">
    <property type="entry name" value="HIGH FREQUENCY LYSOGENIZATION PROTEIN HFLD"/>
    <property type="match status" value="1"/>
</dbReference>
<dbReference type="Pfam" id="PF04356">
    <property type="entry name" value="DUF489"/>
    <property type="match status" value="1"/>
</dbReference>
<dbReference type="SUPFAM" id="SSF101322">
    <property type="entry name" value="YcfC-like"/>
    <property type="match status" value="1"/>
</dbReference>
<protein>
    <recommendedName>
        <fullName evidence="1">High frequency lysogenization protein HflD homolog</fullName>
    </recommendedName>
</protein>
<name>HFLD_HISS2</name>
<reference key="1">
    <citation type="submission" date="2008-02" db="EMBL/GenBank/DDBJ databases">
        <title>Complete sequence of Haemophilus somnus 2336.</title>
        <authorList>
            <consortium name="US DOE Joint Genome Institute"/>
            <person name="Siddaramappa S."/>
            <person name="Duncan A.J."/>
            <person name="Challacombe J.F."/>
            <person name="Rainey D."/>
            <person name="Gillaspy A.F."/>
            <person name="Carson M."/>
            <person name="Gipson J."/>
            <person name="Gipson M."/>
            <person name="Bruce D."/>
            <person name="Detter J.C."/>
            <person name="Han C.S."/>
            <person name="Land M."/>
            <person name="Tapia R."/>
            <person name="Thompson L.S."/>
            <person name="Orvis J."/>
            <person name="Zaitshik J."/>
            <person name="Barnes G."/>
            <person name="Brettin T.S."/>
            <person name="Dyer D.W."/>
            <person name="Inzana T.J."/>
        </authorList>
    </citation>
    <scope>NUCLEOTIDE SEQUENCE [LARGE SCALE GENOMIC DNA]</scope>
    <source>
        <strain>2336</strain>
    </source>
</reference>
<evidence type="ECO:0000255" key="1">
    <source>
        <dbReference type="HAMAP-Rule" id="MF_00695"/>
    </source>
</evidence>
<proteinExistence type="inferred from homology"/>